<feature type="chain" id="PRO_0000066126" description="Uncharacterized 35.9 kDa protein in asd 3'region">
    <location>
        <begin position="1"/>
        <end position="333"/>
    </location>
</feature>
<organism>
    <name type="scientific">Mycolicibacterium smegmatis</name>
    <name type="common">Mycobacterium smegmatis</name>
    <dbReference type="NCBI Taxonomy" id="1772"/>
    <lineage>
        <taxon>Bacteria</taxon>
        <taxon>Bacillati</taxon>
        <taxon>Actinomycetota</taxon>
        <taxon>Actinomycetes</taxon>
        <taxon>Mycobacteriales</taxon>
        <taxon>Mycobacteriaceae</taxon>
        <taxon>Mycolicibacterium</taxon>
    </lineage>
</organism>
<accession>P41402</accession>
<protein>
    <recommendedName>
        <fullName>Uncharacterized 35.9 kDa protein in asd 3'region</fullName>
    </recommendedName>
    <alternativeName>
        <fullName>ORFY</fullName>
    </alternativeName>
</protein>
<proteinExistence type="predicted"/>
<sequence length="333" mass="35881">MLRIGPSAGTGTPTGDYGIGATDLCEFMEFPSRVLQVCGDSFAGQAVGFGGWYSPIALHVESDSIDDPAGIRYNGVSGVDKPLLADPTPPGSSQLPAGVVSINRENYMMVTVTKDLTPQTSRLVKADAAKSSWPTVPGSVREASYLGGNQSQVSGYYDPIPTPDSPRGWVYIVANNFDRSGPVFLYRVPPQDFTDRAAWQGWSSVSGRWGDPATALWPDRVGGDGIRLIDGKAVLSYFNATTGNMEMRVADDPTQLGTAPVTTVVYASDWPDPAETLPPPEVNRLAQPYGGYISPASTLDEVRVFISQWNTRPRGGTPYRVIQYAVNPLKPWE</sequence>
<dbReference type="EMBL" id="Z17372">
    <property type="protein sequence ID" value="CAA78987.1"/>
    <property type="molecule type" value="Genomic_DNA"/>
</dbReference>
<dbReference type="PIR" id="S42424">
    <property type="entry name" value="S42424"/>
</dbReference>
<dbReference type="SMR" id="P41402"/>
<dbReference type="InterPro" id="IPR025442">
    <property type="entry name" value="DUF4185"/>
</dbReference>
<dbReference type="Pfam" id="PF13810">
    <property type="entry name" value="DUF4185"/>
    <property type="match status" value="1"/>
</dbReference>
<name>YASD_MYCSM</name>
<reference key="1">
    <citation type="journal article" date="1994" name="Mol. Microbiol.">
        <title>Isolation and characterization of the aspartokinase and aspartate semialdehyde dehydrogenase operon from mycobacteria.</title>
        <authorList>
            <person name="Cirillo J.D."/>
            <person name="Weisbrod T.R."/>
            <person name="Pascopella L."/>
            <person name="Bloom B.R."/>
            <person name="Jacobs W.R. Jr."/>
        </authorList>
    </citation>
    <scope>NUCLEOTIDE SEQUENCE [GENOMIC DNA]</scope>
    <source>
        <strain>ATCC 607 / DSM 43465 / JCM 20379 / NBRC 3207 / NRRL B-692</strain>
    </source>
</reference>